<accession>Q9CH10</accession>
<gene>
    <name evidence="2" type="primary">deoD</name>
    <name type="ordered locus">LL0931</name>
    <name type="ORF">L156559</name>
</gene>
<keyword id="KW-0328">Glycosyltransferase</keyword>
<keyword id="KW-1185">Reference proteome</keyword>
<keyword id="KW-0808">Transferase</keyword>
<sequence length="234" mass="25427">MPTPHIEAQKGEIADKILLPGDPLRAKFIAENFLEDAVQFNQVRGMLGFTGTYKGHRVSVMGTGMGIPSISIYANELITEYGVKRLIRVGTAGSVNEDVHIRDLVIGQAAATTSAIIRNDFPDFDFPQIADFDLLDKAYHIAKDLGITTHVGNILSSDLFYGGPDAVKVGKLGVKAVEMEAAGLYYLGAKYKVQTLGIMTISDHILTGESTTSEERQLTFTDMMKVGLETLISE</sequence>
<evidence type="ECO:0000250" key="1">
    <source>
        <dbReference type="UniProtKB" id="P50389"/>
    </source>
</evidence>
<evidence type="ECO:0000255" key="2">
    <source>
        <dbReference type="HAMAP-Rule" id="MF_01627"/>
    </source>
</evidence>
<organism>
    <name type="scientific">Lactococcus lactis subsp. lactis (strain IL1403)</name>
    <name type="common">Streptococcus lactis</name>
    <dbReference type="NCBI Taxonomy" id="272623"/>
    <lineage>
        <taxon>Bacteria</taxon>
        <taxon>Bacillati</taxon>
        <taxon>Bacillota</taxon>
        <taxon>Bacilli</taxon>
        <taxon>Lactobacillales</taxon>
        <taxon>Streptococcaceae</taxon>
        <taxon>Lactococcus</taxon>
    </lineage>
</organism>
<protein>
    <recommendedName>
        <fullName evidence="2">Purine nucleoside phosphorylase DeoD-type</fullName>
        <shortName evidence="2">PNP</shortName>
        <ecNumber evidence="2">2.4.2.1</ecNumber>
    </recommendedName>
</protein>
<dbReference type="EC" id="2.4.2.1" evidence="2"/>
<dbReference type="EMBL" id="AE005176">
    <property type="protein sequence ID" value="AAK05029.1"/>
    <property type="molecule type" value="Genomic_DNA"/>
</dbReference>
<dbReference type="PIR" id="C86741">
    <property type="entry name" value="C86741"/>
</dbReference>
<dbReference type="RefSeq" id="NP_267087.1">
    <property type="nucleotide sequence ID" value="NC_002662.1"/>
</dbReference>
<dbReference type="RefSeq" id="WP_004255010.1">
    <property type="nucleotide sequence ID" value="NC_002662.1"/>
</dbReference>
<dbReference type="SMR" id="Q9CH10"/>
<dbReference type="PaxDb" id="272623-L156559"/>
<dbReference type="EnsemblBacteria" id="AAK05029">
    <property type="protein sequence ID" value="AAK05029"/>
    <property type="gene ID" value="L156559"/>
</dbReference>
<dbReference type="GeneID" id="89633069"/>
<dbReference type="KEGG" id="lla:L156559"/>
<dbReference type="PATRIC" id="fig|272623.7.peg.996"/>
<dbReference type="eggNOG" id="COG0813">
    <property type="taxonomic scope" value="Bacteria"/>
</dbReference>
<dbReference type="HOGENOM" id="CLU_068457_2_0_9"/>
<dbReference type="OrthoDB" id="9782889at2"/>
<dbReference type="Proteomes" id="UP000002196">
    <property type="component" value="Chromosome"/>
</dbReference>
<dbReference type="GO" id="GO:0005829">
    <property type="term" value="C:cytosol"/>
    <property type="evidence" value="ECO:0007669"/>
    <property type="project" value="TreeGrafter"/>
</dbReference>
<dbReference type="GO" id="GO:0004731">
    <property type="term" value="F:purine-nucleoside phosphorylase activity"/>
    <property type="evidence" value="ECO:0007669"/>
    <property type="project" value="UniProtKB-UniRule"/>
</dbReference>
<dbReference type="GO" id="GO:0006152">
    <property type="term" value="P:purine nucleoside catabolic process"/>
    <property type="evidence" value="ECO:0007669"/>
    <property type="project" value="TreeGrafter"/>
</dbReference>
<dbReference type="CDD" id="cd09006">
    <property type="entry name" value="PNP_EcPNPI-like"/>
    <property type="match status" value="1"/>
</dbReference>
<dbReference type="Gene3D" id="3.40.50.1580">
    <property type="entry name" value="Nucleoside phosphorylase domain"/>
    <property type="match status" value="1"/>
</dbReference>
<dbReference type="HAMAP" id="MF_01627">
    <property type="entry name" value="Pur_nucleosid_phosp"/>
    <property type="match status" value="1"/>
</dbReference>
<dbReference type="InterPro" id="IPR004402">
    <property type="entry name" value="DeoD-type"/>
</dbReference>
<dbReference type="InterPro" id="IPR018016">
    <property type="entry name" value="Nucleoside_phosphorylase_CS"/>
</dbReference>
<dbReference type="InterPro" id="IPR000845">
    <property type="entry name" value="Nucleoside_phosphorylase_d"/>
</dbReference>
<dbReference type="InterPro" id="IPR035994">
    <property type="entry name" value="Nucleoside_phosphorylase_sf"/>
</dbReference>
<dbReference type="NCBIfam" id="TIGR00107">
    <property type="entry name" value="deoD"/>
    <property type="match status" value="1"/>
</dbReference>
<dbReference type="NCBIfam" id="NF004489">
    <property type="entry name" value="PRK05819.1"/>
    <property type="match status" value="1"/>
</dbReference>
<dbReference type="PANTHER" id="PTHR43691:SF11">
    <property type="entry name" value="FI09636P-RELATED"/>
    <property type="match status" value="1"/>
</dbReference>
<dbReference type="PANTHER" id="PTHR43691">
    <property type="entry name" value="URIDINE PHOSPHORYLASE"/>
    <property type="match status" value="1"/>
</dbReference>
<dbReference type="Pfam" id="PF01048">
    <property type="entry name" value="PNP_UDP_1"/>
    <property type="match status" value="1"/>
</dbReference>
<dbReference type="SUPFAM" id="SSF53167">
    <property type="entry name" value="Purine and uridine phosphorylases"/>
    <property type="match status" value="1"/>
</dbReference>
<dbReference type="PROSITE" id="PS01232">
    <property type="entry name" value="PNP_UDP_1"/>
    <property type="match status" value="1"/>
</dbReference>
<feature type="chain" id="PRO_0000063141" description="Purine nucleoside phosphorylase DeoD-type">
    <location>
        <begin position="1"/>
        <end position="234"/>
    </location>
</feature>
<feature type="active site" description="Proton donor" evidence="2">
    <location>
        <position position="203"/>
    </location>
</feature>
<feature type="binding site" evidence="1">
    <location>
        <position position="5"/>
    </location>
    <ligand>
        <name>a purine D-ribonucleoside</name>
        <dbReference type="ChEBI" id="CHEBI:142355"/>
        <note>ligand shared between dimeric partners</note>
    </ligand>
</feature>
<feature type="binding site" description="in other chain" evidence="1">
    <location>
        <position position="21"/>
    </location>
    <ligand>
        <name>phosphate</name>
        <dbReference type="ChEBI" id="CHEBI:43474"/>
        <note>ligand shared between dimeric partners</note>
    </ligand>
</feature>
<feature type="binding site" description="in other chain" evidence="1">
    <location>
        <position position="25"/>
    </location>
    <ligand>
        <name>phosphate</name>
        <dbReference type="ChEBI" id="CHEBI:43474"/>
        <note>ligand shared between dimeric partners</note>
    </ligand>
</feature>
<feature type="binding site" evidence="1">
    <location>
        <position position="44"/>
    </location>
    <ligand>
        <name>phosphate</name>
        <dbReference type="ChEBI" id="CHEBI:43474"/>
        <note>ligand shared between dimeric partners</note>
    </ligand>
</feature>
<feature type="binding site" description="in other chain" evidence="1">
    <location>
        <begin position="88"/>
        <end position="91"/>
    </location>
    <ligand>
        <name>phosphate</name>
        <dbReference type="ChEBI" id="CHEBI:43474"/>
        <note>ligand shared between dimeric partners</note>
    </ligand>
</feature>
<feature type="binding site" description="in other chain" evidence="1">
    <location>
        <begin position="178"/>
        <end position="180"/>
    </location>
    <ligand>
        <name>a purine D-ribonucleoside</name>
        <dbReference type="ChEBI" id="CHEBI:142355"/>
        <note>ligand shared between dimeric partners</note>
    </ligand>
</feature>
<feature type="binding site" description="in other chain" evidence="1">
    <location>
        <begin position="202"/>
        <end position="203"/>
    </location>
    <ligand>
        <name>a purine D-ribonucleoside</name>
        <dbReference type="ChEBI" id="CHEBI:142355"/>
        <note>ligand shared between dimeric partners</note>
    </ligand>
</feature>
<feature type="site" description="Important for catalytic activity" evidence="2">
    <location>
        <position position="216"/>
    </location>
</feature>
<name>DEOD_LACLA</name>
<proteinExistence type="inferred from homology"/>
<reference key="1">
    <citation type="journal article" date="2001" name="Genome Res.">
        <title>The complete genome sequence of the lactic acid bacterium Lactococcus lactis ssp. lactis IL1403.</title>
        <authorList>
            <person name="Bolotin A."/>
            <person name="Wincker P."/>
            <person name="Mauger S."/>
            <person name="Jaillon O."/>
            <person name="Malarme K."/>
            <person name="Weissenbach J."/>
            <person name="Ehrlich S.D."/>
            <person name="Sorokin A."/>
        </authorList>
    </citation>
    <scope>NUCLEOTIDE SEQUENCE [LARGE SCALE GENOMIC DNA]</scope>
    <source>
        <strain>IL1403</strain>
    </source>
</reference>
<comment type="function">
    <text evidence="2">Catalyzes the reversible phosphorolytic breakdown of the N-glycosidic bond in the beta-(deoxy)ribonucleoside molecules, with the formation of the corresponding free purine bases and pentose-1-phosphate.</text>
</comment>
<comment type="catalytic activity">
    <reaction evidence="2">
        <text>a purine D-ribonucleoside + phosphate = a purine nucleobase + alpha-D-ribose 1-phosphate</text>
        <dbReference type="Rhea" id="RHEA:19805"/>
        <dbReference type="ChEBI" id="CHEBI:26386"/>
        <dbReference type="ChEBI" id="CHEBI:43474"/>
        <dbReference type="ChEBI" id="CHEBI:57720"/>
        <dbReference type="ChEBI" id="CHEBI:142355"/>
        <dbReference type="EC" id="2.4.2.1"/>
    </reaction>
</comment>
<comment type="catalytic activity">
    <reaction evidence="2">
        <text>a purine 2'-deoxy-D-ribonucleoside + phosphate = a purine nucleobase + 2-deoxy-alpha-D-ribose 1-phosphate</text>
        <dbReference type="Rhea" id="RHEA:36431"/>
        <dbReference type="ChEBI" id="CHEBI:26386"/>
        <dbReference type="ChEBI" id="CHEBI:43474"/>
        <dbReference type="ChEBI" id="CHEBI:57259"/>
        <dbReference type="ChEBI" id="CHEBI:142361"/>
        <dbReference type="EC" id="2.4.2.1"/>
    </reaction>
</comment>
<comment type="subunit">
    <text evidence="2">Homohexamer; trimer of homodimers.</text>
</comment>
<comment type="similarity">
    <text evidence="2">Belongs to the PNP/UDP phosphorylase family.</text>
</comment>